<feature type="chain" id="PRO_0000327722" description="Probable phosphoserine aminotransferase">
    <location>
        <begin position="1"/>
        <end position="374"/>
    </location>
</feature>
<feature type="binding site" evidence="1">
    <location>
        <position position="48"/>
    </location>
    <ligand>
        <name>L-glutamate</name>
        <dbReference type="ChEBI" id="CHEBI:29985"/>
    </ligand>
</feature>
<feature type="binding site" evidence="1">
    <location>
        <begin position="82"/>
        <end position="83"/>
    </location>
    <ligand>
        <name>pyridoxal 5'-phosphate</name>
        <dbReference type="ChEBI" id="CHEBI:597326"/>
    </ligand>
</feature>
<feature type="binding site" evidence="1">
    <location>
        <position position="110"/>
    </location>
    <ligand>
        <name>pyridoxal 5'-phosphate</name>
        <dbReference type="ChEBI" id="CHEBI:597326"/>
    </ligand>
</feature>
<feature type="binding site" evidence="1">
    <location>
        <position position="160"/>
    </location>
    <ligand>
        <name>pyridoxal 5'-phosphate</name>
        <dbReference type="ChEBI" id="CHEBI:597326"/>
    </ligand>
</feature>
<feature type="binding site" evidence="1">
    <location>
        <position position="183"/>
    </location>
    <ligand>
        <name>pyridoxal 5'-phosphate</name>
        <dbReference type="ChEBI" id="CHEBI:597326"/>
    </ligand>
</feature>
<feature type="binding site" evidence="1">
    <location>
        <position position="206"/>
    </location>
    <ligand>
        <name>pyridoxal 5'-phosphate</name>
        <dbReference type="ChEBI" id="CHEBI:597326"/>
    </ligand>
</feature>
<feature type="binding site" evidence="1">
    <location>
        <begin position="248"/>
        <end position="249"/>
    </location>
    <ligand>
        <name>pyridoxal 5'-phosphate</name>
        <dbReference type="ChEBI" id="CHEBI:597326"/>
    </ligand>
</feature>
<feature type="modified residue" description="N6-(pyridoxal phosphate)lysine" evidence="1">
    <location>
        <position position="207"/>
    </location>
</feature>
<gene>
    <name type="primary">serC</name>
    <name type="ORF">DDB_G0269950</name>
</gene>
<organism>
    <name type="scientific">Dictyostelium discoideum</name>
    <name type="common">Social amoeba</name>
    <dbReference type="NCBI Taxonomy" id="44689"/>
    <lineage>
        <taxon>Eukaryota</taxon>
        <taxon>Amoebozoa</taxon>
        <taxon>Evosea</taxon>
        <taxon>Eumycetozoa</taxon>
        <taxon>Dictyostelia</taxon>
        <taxon>Dictyosteliales</taxon>
        <taxon>Dictyosteliaceae</taxon>
        <taxon>Dictyostelium</taxon>
    </lineage>
</organism>
<proteinExistence type="inferred from homology"/>
<evidence type="ECO:0000250" key="1"/>
<evidence type="ECO:0000250" key="2">
    <source>
        <dbReference type="UniProtKB" id="P10658"/>
    </source>
</evidence>
<evidence type="ECO:0000305" key="3"/>
<protein>
    <recommendedName>
        <fullName>Probable phosphoserine aminotransferase</fullName>
        <shortName>PSAT</shortName>
        <ecNumber>2.6.1.52</ecNumber>
    </recommendedName>
    <alternativeName>
        <fullName>Phosphohydroxythreonine aminotransferase</fullName>
    </alternativeName>
</protein>
<dbReference type="EC" id="2.6.1.52"/>
<dbReference type="EMBL" id="AAFI02000005">
    <property type="protein sequence ID" value="EAL72325.1"/>
    <property type="molecule type" value="Genomic_DNA"/>
</dbReference>
<dbReference type="RefSeq" id="XP_646425.1">
    <property type="nucleotide sequence ID" value="XM_641333.1"/>
</dbReference>
<dbReference type="SMR" id="Q55CQ6"/>
<dbReference type="FunCoup" id="Q55CQ6">
    <property type="interactions" value="352"/>
</dbReference>
<dbReference type="STRING" id="44689.Q55CQ6"/>
<dbReference type="PaxDb" id="44689-DDB0230053"/>
<dbReference type="EnsemblProtists" id="EAL72325">
    <property type="protein sequence ID" value="EAL72325"/>
    <property type="gene ID" value="DDB_G0269950"/>
</dbReference>
<dbReference type="GeneID" id="8617383"/>
<dbReference type="KEGG" id="ddi:DDB_G0269950"/>
<dbReference type="dictyBase" id="DDB_G0269950">
    <property type="gene designation" value="serC"/>
</dbReference>
<dbReference type="VEuPathDB" id="AmoebaDB:DDB_G0269950"/>
<dbReference type="eggNOG" id="KOG2790">
    <property type="taxonomic scope" value="Eukaryota"/>
</dbReference>
<dbReference type="HOGENOM" id="CLU_034866_0_2_1"/>
<dbReference type="InParanoid" id="Q55CQ6"/>
<dbReference type="OMA" id="AFVYFCD"/>
<dbReference type="PhylomeDB" id="Q55CQ6"/>
<dbReference type="Reactome" id="R-DDI-977347">
    <property type="pathway name" value="Serine biosynthesis"/>
</dbReference>
<dbReference type="UniPathway" id="UPA00135">
    <property type="reaction ID" value="UER00197"/>
</dbReference>
<dbReference type="UniPathway" id="UPA00244">
    <property type="reaction ID" value="UER00311"/>
</dbReference>
<dbReference type="PRO" id="PR:Q55CQ6"/>
<dbReference type="Proteomes" id="UP000002195">
    <property type="component" value="Chromosome 1"/>
</dbReference>
<dbReference type="GO" id="GO:0005737">
    <property type="term" value="C:cytoplasm"/>
    <property type="evidence" value="ECO:0000318"/>
    <property type="project" value="GO_Central"/>
</dbReference>
<dbReference type="GO" id="GO:0004648">
    <property type="term" value="F:O-phospho-L-serine:2-oxoglutarate aminotransferase activity"/>
    <property type="evidence" value="ECO:0000250"/>
    <property type="project" value="dictyBase"/>
</dbReference>
<dbReference type="GO" id="GO:0030170">
    <property type="term" value="F:pyridoxal phosphate binding"/>
    <property type="evidence" value="ECO:0000318"/>
    <property type="project" value="GO_Central"/>
</dbReference>
<dbReference type="GO" id="GO:0006564">
    <property type="term" value="P:L-serine biosynthetic process"/>
    <property type="evidence" value="ECO:0000318"/>
    <property type="project" value="GO_Central"/>
</dbReference>
<dbReference type="GO" id="GO:0009070">
    <property type="term" value="P:serine family amino acid biosynthetic process"/>
    <property type="evidence" value="ECO:0000250"/>
    <property type="project" value="dictyBase"/>
</dbReference>
<dbReference type="FunFam" id="3.40.640.10:FF:000010">
    <property type="entry name" value="Phosphoserine aminotransferase"/>
    <property type="match status" value="1"/>
</dbReference>
<dbReference type="FunFam" id="3.90.1150.10:FF:000006">
    <property type="entry name" value="Phosphoserine aminotransferase"/>
    <property type="match status" value="1"/>
</dbReference>
<dbReference type="Gene3D" id="3.90.1150.10">
    <property type="entry name" value="Aspartate Aminotransferase, domain 1"/>
    <property type="match status" value="1"/>
</dbReference>
<dbReference type="Gene3D" id="3.40.640.10">
    <property type="entry name" value="Type I PLP-dependent aspartate aminotransferase-like (Major domain)"/>
    <property type="match status" value="1"/>
</dbReference>
<dbReference type="HAMAP" id="MF_00160">
    <property type="entry name" value="SerC_aminotrans_5"/>
    <property type="match status" value="1"/>
</dbReference>
<dbReference type="InterPro" id="IPR000192">
    <property type="entry name" value="Aminotrans_V_dom"/>
</dbReference>
<dbReference type="InterPro" id="IPR020578">
    <property type="entry name" value="Aminotrans_V_PyrdxlP_BS"/>
</dbReference>
<dbReference type="InterPro" id="IPR022278">
    <property type="entry name" value="Pser_aminoTfrase"/>
</dbReference>
<dbReference type="InterPro" id="IPR015424">
    <property type="entry name" value="PyrdxlP-dep_Trfase"/>
</dbReference>
<dbReference type="InterPro" id="IPR015421">
    <property type="entry name" value="PyrdxlP-dep_Trfase_major"/>
</dbReference>
<dbReference type="InterPro" id="IPR015422">
    <property type="entry name" value="PyrdxlP-dep_Trfase_small"/>
</dbReference>
<dbReference type="NCBIfam" id="NF003764">
    <property type="entry name" value="PRK05355.1"/>
    <property type="match status" value="1"/>
</dbReference>
<dbReference type="NCBIfam" id="TIGR01364">
    <property type="entry name" value="serC_1"/>
    <property type="match status" value="1"/>
</dbReference>
<dbReference type="PANTHER" id="PTHR43247">
    <property type="entry name" value="PHOSPHOSERINE AMINOTRANSFERASE"/>
    <property type="match status" value="1"/>
</dbReference>
<dbReference type="PANTHER" id="PTHR43247:SF1">
    <property type="entry name" value="PHOSPHOSERINE AMINOTRANSFERASE"/>
    <property type="match status" value="1"/>
</dbReference>
<dbReference type="Pfam" id="PF00266">
    <property type="entry name" value="Aminotran_5"/>
    <property type="match status" value="1"/>
</dbReference>
<dbReference type="PIRSF" id="PIRSF000525">
    <property type="entry name" value="SerC"/>
    <property type="match status" value="1"/>
</dbReference>
<dbReference type="SUPFAM" id="SSF53383">
    <property type="entry name" value="PLP-dependent transferases"/>
    <property type="match status" value="1"/>
</dbReference>
<dbReference type="PROSITE" id="PS00595">
    <property type="entry name" value="AA_TRANSFER_CLASS_5"/>
    <property type="match status" value="1"/>
</dbReference>
<comment type="function">
    <text evidence="2">Catalyzes the reversible conversion of 3-phosphohydroxypyruvate to phosphoserine and of 3-hydroxy-2-oxo-4-phosphonooxybutanoate to phosphohydroxythreonine.</text>
</comment>
<comment type="catalytic activity">
    <reaction>
        <text>O-phospho-L-serine + 2-oxoglutarate = 3-phosphooxypyruvate + L-glutamate</text>
        <dbReference type="Rhea" id="RHEA:14329"/>
        <dbReference type="ChEBI" id="CHEBI:16810"/>
        <dbReference type="ChEBI" id="CHEBI:18110"/>
        <dbReference type="ChEBI" id="CHEBI:29985"/>
        <dbReference type="ChEBI" id="CHEBI:57524"/>
        <dbReference type="EC" id="2.6.1.52"/>
    </reaction>
</comment>
<comment type="catalytic activity">
    <reaction>
        <text>4-(phosphooxy)-L-threonine + 2-oxoglutarate = (R)-3-hydroxy-2-oxo-4-phosphooxybutanoate + L-glutamate</text>
        <dbReference type="Rhea" id="RHEA:16573"/>
        <dbReference type="ChEBI" id="CHEBI:16810"/>
        <dbReference type="ChEBI" id="CHEBI:29985"/>
        <dbReference type="ChEBI" id="CHEBI:58452"/>
        <dbReference type="ChEBI" id="CHEBI:58538"/>
        <dbReference type="EC" id="2.6.1.52"/>
    </reaction>
</comment>
<comment type="cofactor">
    <cofactor evidence="1">
        <name>pyridoxal 5'-phosphate</name>
        <dbReference type="ChEBI" id="CHEBI:597326"/>
    </cofactor>
    <text evidence="1">Binds 1 pyridoxal phosphate per subunit.</text>
</comment>
<comment type="pathway">
    <text>Amino-acid biosynthesis; L-serine biosynthesis; L-serine from 3-phospho-D-glycerate: step 2/3.</text>
</comment>
<comment type="pathway">
    <text>Cofactor biosynthesis; pyridoxine 5'-phosphate biosynthesis; pyridoxine 5'-phosphate from D-erythrose 4-phosphate: step 3/5.</text>
</comment>
<comment type="subunit">
    <text evidence="1">Homodimer.</text>
</comment>
<comment type="similarity">
    <text evidence="3">Belongs to the class-V pyridoxal-phosphate-dependent aminotransferase family. SerC subfamily.</text>
</comment>
<name>SERC_DICDI</name>
<keyword id="KW-0028">Amino-acid biosynthesis</keyword>
<keyword id="KW-0032">Aminotransferase</keyword>
<keyword id="KW-0663">Pyridoxal phosphate</keyword>
<keyword id="KW-1185">Reference proteome</keyword>
<keyword id="KW-0718">Serine biosynthesis</keyword>
<keyword id="KW-0808">Transferase</keyword>
<sequence length="374" mass="41992">MTENINEFRVNNFGAGPGCIPTEVLLEAQKELLNFQGCGKSIMEVSHRGKEFEGVINETKSNLKKLLSISDDYDILFLQGGASSLFAGIPMNLCENGVEDIVDFIVTGSWSKQASNDGKYFCKVNKVVDMEKEKFLTVTEPQSWKFSPDAKYVHYCDNETIHGIEMPISTPDHLPSNLIKVCDMSSNFLSKPIDVNKFDLIFAGAQKNAGISGITIVIIKKSLLLKTKPNVPSVFNFLKKSQNNSLDNTPPTFNIYITGLILKWIINKGGLSEIEKLNIAKAHALYEYIDNSNSFYKCSIDKNYRSRMNVVFRIQDGNTELEEKFIKEASKENITDIKGHRSVGGLRVSLYNAITIDQTLILINFMTNFHNNNK</sequence>
<accession>Q55CQ6</accession>
<reference key="1">
    <citation type="journal article" date="2005" name="Nature">
        <title>The genome of the social amoeba Dictyostelium discoideum.</title>
        <authorList>
            <person name="Eichinger L."/>
            <person name="Pachebat J.A."/>
            <person name="Gloeckner G."/>
            <person name="Rajandream M.A."/>
            <person name="Sucgang R."/>
            <person name="Berriman M."/>
            <person name="Song J."/>
            <person name="Olsen R."/>
            <person name="Szafranski K."/>
            <person name="Xu Q."/>
            <person name="Tunggal B."/>
            <person name="Kummerfeld S."/>
            <person name="Madera M."/>
            <person name="Konfortov B.A."/>
            <person name="Rivero F."/>
            <person name="Bankier A.T."/>
            <person name="Lehmann R."/>
            <person name="Hamlin N."/>
            <person name="Davies R."/>
            <person name="Gaudet P."/>
            <person name="Fey P."/>
            <person name="Pilcher K."/>
            <person name="Chen G."/>
            <person name="Saunders D."/>
            <person name="Sodergren E.J."/>
            <person name="Davis P."/>
            <person name="Kerhornou A."/>
            <person name="Nie X."/>
            <person name="Hall N."/>
            <person name="Anjard C."/>
            <person name="Hemphill L."/>
            <person name="Bason N."/>
            <person name="Farbrother P."/>
            <person name="Desany B."/>
            <person name="Just E."/>
            <person name="Morio T."/>
            <person name="Rost R."/>
            <person name="Churcher C.M."/>
            <person name="Cooper J."/>
            <person name="Haydock S."/>
            <person name="van Driessche N."/>
            <person name="Cronin A."/>
            <person name="Goodhead I."/>
            <person name="Muzny D.M."/>
            <person name="Mourier T."/>
            <person name="Pain A."/>
            <person name="Lu M."/>
            <person name="Harper D."/>
            <person name="Lindsay R."/>
            <person name="Hauser H."/>
            <person name="James K.D."/>
            <person name="Quiles M."/>
            <person name="Madan Babu M."/>
            <person name="Saito T."/>
            <person name="Buchrieser C."/>
            <person name="Wardroper A."/>
            <person name="Felder M."/>
            <person name="Thangavelu M."/>
            <person name="Johnson D."/>
            <person name="Knights A."/>
            <person name="Loulseged H."/>
            <person name="Mungall K.L."/>
            <person name="Oliver K."/>
            <person name="Price C."/>
            <person name="Quail M.A."/>
            <person name="Urushihara H."/>
            <person name="Hernandez J."/>
            <person name="Rabbinowitsch E."/>
            <person name="Steffen D."/>
            <person name="Sanders M."/>
            <person name="Ma J."/>
            <person name="Kohara Y."/>
            <person name="Sharp S."/>
            <person name="Simmonds M.N."/>
            <person name="Spiegler S."/>
            <person name="Tivey A."/>
            <person name="Sugano S."/>
            <person name="White B."/>
            <person name="Walker D."/>
            <person name="Woodward J.R."/>
            <person name="Winckler T."/>
            <person name="Tanaka Y."/>
            <person name="Shaulsky G."/>
            <person name="Schleicher M."/>
            <person name="Weinstock G.M."/>
            <person name="Rosenthal A."/>
            <person name="Cox E.C."/>
            <person name="Chisholm R.L."/>
            <person name="Gibbs R.A."/>
            <person name="Loomis W.F."/>
            <person name="Platzer M."/>
            <person name="Kay R.R."/>
            <person name="Williams J.G."/>
            <person name="Dear P.H."/>
            <person name="Noegel A.A."/>
            <person name="Barrell B.G."/>
            <person name="Kuspa A."/>
        </authorList>
    </citation>
    <scope>NUCLEOTIDE SEQUENCE [LARGE SCALE GENOMIC DNA]</scope>
    <source>
        <strain>AX4</strain>
    </source>
</reference>